<name>DADA_BURMA</name>
<protein>
    <recommendedName>
        <fullName evidence="1">D-amino acid dehydrogenase</fullName>
        <ecNumber evidence="1">1.4.99.-</ecNumber>
    </recommendedName>
</protein>
<dbReference type="EC" id="1.4.99.-" evidence="1"/>
<dbReference type="EMBL" id="CP000010">
    <property type="protein sequence ID" value="AAU48784.1"/>
    <property type="molecule type" value="Genomic_DNA"/>
</dbReference>
<dbReference type="RefSeq" id="WP_004189387.1">
    <property type="nucleotide sequence ID" value="NC_006348.1"/>
</dbReference>
<dbReference type="RefSeq" id="YP_102222.1">
    <property type="nucleotide sequence ID" value="NC_006348.1"/>
</dbReference>
<dbReference type="SMR" id="Q62M46"/>
<dbReference type="KEGG" id="bma:BMA0408"/>
<dbReference type="PATRIC" id="fig|243160.12.peg.414"/>
<dbReference type="eggNOG" id="COG0665">
    <property type="taxonomic scope" value="Bacteria"/>
</dbReference>
<dbReference type="HOGENOM" id="CLU_007884_9_2_4"/>
<dbReference type="UniPathway" id="UPA00043">
    <property type="reaction ID" value="UER00498"/>
</dbReference>
<dbReference type="Proteomes" id="UP000006693">
    <property type="component" value="Chromosome 1"/>
</dbReference>
<dbReference type="GO" id="GO:0005737">
    <property type="term" value="C:cytoplasm"/>
    <property type="evidence" value="ECO:0007669"/>
    <property type="project" value="TreeGrafter"/>
</dbReference>
<dbReference type="GO" id="GO:0005886">
    <property type="term" value="C:plasma membrane"/>
    <property type="evidence" value="ECO:0007669"/>
    <property type="project" value="TreeGrafter"/>
</dbReference>
<dbReference type="GO" id="GO:0008718">
    <property type="term" value="F:D-amino-acid dehydrogenase activity"/>
    <property type="evidence" value="ECO:0007669"/>
    <property type="project" value="UniProtKB-UniRule"/>
</dbReference>
<dbReference type="GO" id="GO:0055130">
    <property type="term" value="P:D-alanine catabolic process"/>
    <property type="evidence" value="ECO:0007669"/>
    <property type="project" value="UniProtKB-UniPathway"/>
</dbReference>
<dbReference type="FunFam" id="3.50.50.60:FF:000020">
    <property type="entry name" value="D-amino acid dehydrogenase"/>
    <property type="match status" value="1"/>
</dbReference>
<dbReference type="Gene3D" id="3.30.9.10">
    <property type="entry name" value="D-Amino Acid Oxidase, subunit A, domain 2"/>
    <property type="match status" value="1"/>
</dbReference>
<dbReference type="Gene3D" id="3.50.50.60">
    <property type="entry name" value="FAD/NAD(P)-binding domain"/>
    <property type="match status" value="2"/>
</dbReference>
<dbReference type="HAMAP" id="MF_01202">
    <property type="entry name" value="DadA"/>
    <property type="match status" value="1"/>
</dbReference>
<dbReference type="InterPro" id="IPR023080">
    <property type="entry name" value="DadA"/>
</dbReference>
<dbReference type="InterPro" id="IPR006076">
    <property type="entry name" value="FAD-dep_OxRdtase"/>
</dbReference>
<dbReference type="InterPro" id="IPR036188">
    <property type="entry name" value="FAD/NAD-bd_sf"/>
</dbReference>
<dbReference type="NCBIfam" id="NF001933">
    <property type="entry name" value="PRK00711.1"/>
    <property type="match status" value="1"/>
</dbReference>
<dbReference type="PANTHER" id="PTHR13847:SF280">
    <property type="entry name" value="D-AMINO ACID DEHYDROGENASE"/>
    <property type="match status" value="1"/>
</dbReference>
<dbReference type="PANTHER" id="PTHR13847">
    <property type="entry name" value="SARCOSINE DEHYDROGENASE-RELATED"/>
    <property type="match status" value="1"/>
</dbReference>
<dbReference type="Pfam" id="PF01266">
    <property type="entry name" value="DAO"/>
    <property type="match status" value="1"/>
</dbReference>
<dbReference type="SUPFAM" id="SSF54373">
    <property type="entry name" value="FAD-linked reductases, C-terminal domain"/>
    <property type="match status" value="1"/>
</dbReference>
<dbReference type="SUPFAM" id="SSF51905">
    <property type="entry name" value="FAD/NAD(P)-binding domain"/>
    <property type="match status" value="1"/>
</dbReference>
<comment type="function">
    <text evidence="1">Oxidative deamination of D-amino acids.</text>
</comment>
<comment type="catalytic activity">
    <reaction evidence="1">
        <text>a D-alpha-amino acid + A + H2O = a 2-oxocarboxylate + AH2 + NH4(+)</text>
        <dbReference type="Rhea" id="RHEA:18125"/>
        <dbReference type="ChEBI" id="CHEBI:13193"/>
        <dbReference type="ChEBI" id="CHEBI:15377"/>
        <dbReference type="ChEBI" id="CHEBI:17499"/>
        <dbReference type="ChEBI" id="CHEBI:28938"/>
        <dbReference type="ChEBI" id="CHEBI:35179"/>
        <dbReference type="ChEBI" id="CHEBI:59871"/>
    </reaction>
</comment>
<comment type="cofactor">
    <cofactor evidence="1">
        <name>FAD</name>
        <dbReference type="ChEBI" id="CHEBI:57692"/>
    </cofactor>
</comment>
<comment type="pathway">
    <text>Amino-acid degradation; D-alanine degradation; NH(3) and pyruvate from D-alanine: step 1/1.</text>
</comment>
<comment type="similarity">
    <text evidence="1">Belongs to the DadA oxidoreductase family.</text>
</comment>
<gene>
    <name evidence="1" type="primary">dadA</name>
    <name type="ordered locus">BMA0408</name>
</gene>
<evidence type="ECO:0000255" key="1">
    <source>
        <dbReference type="HAMAP-Rule" id="MF_01202"/>
    </source>
</evidence>
<feature type="chain" id="PRO_1000066077" description="D-amino acid dehydrogenase">
    <location>
        <begin position="1"/>
        <end position="428"/>
    </location>
</feature>
<feature type="binding site" evidence="1">
    <location>
        <begin position="3"/>
        <end position="17"/>
    </location>
    <ligand>
        <name>FAD</name>
        <dbReference type="ChEBI" id="CHEBI:57692"/>
    </ligand>
</feature>
<accession>Q62M46</accession>
<organism>
    <name type="scientific">Burkholderia mallei (strain ATCC 23344)</name>
    <dbReference type="NCBI Taxonomy" id="243160"/>
    <lineage>
        <taxon>Bacteria</taxon>
        <taxon>Pseudomonadati</taxon>
        <taxon>Pseudomonadota</taxon>
        <taxon>Betaproteobacteria</taxon>
        <taxon>Burkholderiales</taxon>
        <taxon>Burkholderiaceae</taxon>
        <taxon>Burkholderia</taxon>
        <taxon>pseudomallei group</taxon>
    </lineage>
</organism>
<reference key="1">
    <citation type="journal article" date="2004" name="Proc. Natl. Acad. Sci. U.S.A.">
        <title>Structural flexibility in the Burkholderia mallei genome.</title>
        <authorList>
            <person name="Nierman W.C."/>
            <person name="DeShazer D."/>
            <person name="Kim H.S."/>
            <person name="Tettelin H."/>
            <person name="Nelson K.E."/>
            <person name="Feldblyum T.V."/>
            <person name="Ulrich R.L."/>
            <person name="Ronning C.M."/>
            <person name="Brinkac L.M."/>
            <person name="Daugherty S.C."/>
            <person name="Davidsen T.D."/>
            <person name="DeBoy R.T."/>
            <person name="Dimitrov G."/>
            <person name="Dodson R.J."/>
            <person name="Durkin A.S."/>
            <person name="Gwinn M.L."/>
            <person name="Haft D.H."/>
            <person name="Khouri H.M."/>
            <person name="Kolonay J.F."/>
            <person name="Madupu R."/>
            <person name="Mohammoud Y."/>
            <person name="Nelson W.C."/>
            <person name="Radune D."/>
            <person name="Romero C.M."/>
            <person name="Sarria S."/>
            <person name="Selengut J."/>
            <person name="Shamblin C."/>
            <person name="Sullivan S.A."/>
            <person name="White O."/>
            <person name="Yu Y."/>
            <person name="Zafar N."/>
            <person name="Zhou L."/>
            <person name="Fraser C.M."/>
        </authorList>
    </citation>
    <scope>NUCLEOTIDE SEQUENCE [LARGE SCALE GENOMIC DNA]</scope>
    <source>
        <strain>ATCC 23344</strain>
    </source>
</reference>
<keyword id="KW-0274">FAD</keyword>
<keyword id="KW-0285">Flavoprotein</keyword>
<keyword id="KW-0560">Oxidoreductase</keyword>
<keyword id="KW-1185">Reference proteome</keyword>
<proteinExistence type="inferred from homology"/>
<sequence>MRVVILGSGVVGVASAYYLARAGHEVTVIDREAGPALDTSFANAGQISPGYAAPWAAPGVPLKAVKWMFEKHAPLAIRLDGTRFQLQWMWQMLRNCTTERYALNKGRMVRLAEYSRDCLQALRAETAIQYEGRTGGTLQVFRTQQQLDGAAKDIAVLREANVPFELLSSDELKKAEPALAAVSHKLTGGLRLPGDETGDCQLFTTRLAALAEQLGVKFRFNTRIDALAVAGGKIAGVQCGGEMVRADAYVVALGSYSTNLVASLVKIPVYPLKGYSITAPIVDAAKAPVSTVLDETYKIAITRFDDRIRVGGMAEIVGFDKRLRDARRGTLEMCVNDLFPGGGDTAKATFWTGLRPMTPDGTPIVGRTPVPNLFLNTGHGTLGWTMSCGSGQLLADLMSGKKPAIRADDLSVHRYLSETDGEHRPAYA</sequence>